<gene>
    <name evidence="1" type="primary">proS</name>
    <name type="ordered locus">Shewmr7_1410</name>
</gene>
<feature type="chain" id="PRO_0000288378" description="Proline--tRNA ligase">
    <location>
        <begin position="1"/>
        <end position="570"/>
    </location>
</feature>
<sequence length="570" mass="63212">MRVSKYLLSTQKETPANAEVISHQLMLRAGMIRRNASGLYSYLPTGLRVLRKVEAIVREEMNKAGAIEILMPMVQPADLWVETGRWDKFGPELLRFKDRHNRDFVLGPTHEEVITDLIRKEVSSYKQLPLNLYQIQTKFRDEVRPRFGVMRSREFLMKDAYSFHLDVDTMNETYEAMYQAYSNILSRMGLAFRPVLADTGSIGGSMSHEFHVLAQSGEDLIAYSTGSDYAANIEKAESPMPTEARGSATEELRLVDTPNAKTIAELVEQFGLDITKTVKTLIVKGATEEAPLVALIVRGDHELNEIKADKLDLVASPLEFAPEALIRDAIGAGPGSLGPVGLNMPIIIDHSVSVMSDFAAGANQDDKHYFGINWERDLPLAQAADIRNVVEGEPTPDGLGTYAMARGIEVGHIFQLGTNYSKSMNATVLDENGKSQVLLMGCYGVGVSRIVAAAIEQNFDDRGIVWPEAIAPFSVGILPMNMHKSHRVTDIAEQLYKDLSAAGIDVLLDDRKERPGVMFADMELIGIPHTVVIGDRNIDAGVFEYKNRRTGEKQDVPFDQIVDFLKNLQA</sequence>
<accession>Q0HWU6</accession>
<organism>
    <name type="scientific">Shewanella sp. (strain MR-7)</name>
    <dbReference type="NCBI Taxonomy" id="60481"/>
    <lineage>
        <taxon>Bacteria</taxon>
        <taxon>Pseudomonadati</taxon>
        <taxon>Pseudomonadota</taxon>
        <taxon>Gammaproteobacteria</taxon>
        <taxon>Alteromonadales</taxon>
        <taxon>Shewanellaceae</taxon>
        <taxon>Shewanella</taxon>
    </lineage>
</organism>
<comment type="function">
    <text evidence="1">Catalyzes the attachment of proline to tRNA(Pro) in a two-step reaction: proline is first activated by ATP to form Pro-AMP and then transferred to the acceptor end of tRNA(Pro). As ProRS can inadvertently accommodate and process non-cognate amino acids such as alanine and cysteine, to avoid such errors it has two additional distinct editing activities against alanine. One activity is designated as 'pretransfer' editing and involves the tRNA(Pro)-independent hydrolysis of activated Ala-AMP. The other activity is designated 'posttransfer' editing and involves deacylation of mischarged Ala-tRNA(Pro). The misacylated Cys-tRNA(Pro) is not edited by ProRS.</text>
</comment>
<comment type="catalytic activity">
    <reaction evidence="1">
        <text>tRNA(Pro) + L-proline + ATP = L-prolyl-tRNA(Pro) + AMP + diphosphate</text>
        <dbReference type="Rhea" id="RHEA:14305"/>
        <dbReference type="Rhea" id="RHEA-COMP:9700"/>
        <dbReference type="Rhea" id="RHEA-COMP:9702"/>
        <dbReference type="ChEBI" id="CHEBI:30616"/>
        <dbReference type="ChEBI" id="CHEBI:33019"/>
        <dbReference type="ChEBI" id="CHEBI:60039"/>
        <dbReference type="ChEBI" id="CHEBI:78442"/>
        <dbReference type="ChEBI" id="CHEBI:78532"/>
        <dbReference type="ChEBI" id="CHEBI:456215"/>
        <dbReference type="EC" id="6.1.1.15"/>
    </reaction>
</comment>
<comment type="subunit">
    <text evidence="1">Homodimer.</text>
</comment>
<comment type="subcellular location">
    <subcellularLocation>
        <location evidence="1">Cytoplasm</location>
    </subcellularLocation>
</comment>
<comment type="domain">
    <text evidence="1">Consists of three domains: the N-terminal catalytic domain, the editing domain and the C-terminal anticodon-binding domain.</text>
</comment>
<comment type="similarity">
    <text evidence="1">Belongs to the class-II aminoacyl-tRNA synthetase family. ProS type 1 subfamily.</text>
</comment>
<reference key="1">
    <citation type="submission" date="2006-08" db="EMBL/GenBank/DDBJ databases">
        <title>Complete sequence of chromosome 1 of Shewanella sp. MR-7.</title>
        <authorList>
            <person name="Copeland A."/>
            <person name="Lucas S."/>
            <person name="Lapidus A."/>
            <person name="Barry K."/>
            <person name="Detter J.C."/>
            <person name="Glavina del Rio T."/>
            <person name="Hammon N."/>
            <person name="Israni S."/>
            <person name="Dalin E."/>
            <person name="Tice H."/>
            <person name="Pitluck S."/>
            <person name="Kiss H."/>
            <person name="Brettin T."/>
            <person name="Bruce D."/>
            <person name="Han C."/>
            <person name="Tapia R."/>
            <person name="Gilna P."/>
            <person name="Schmutz J."/>
            <person name="Larimer F."/>
            <person name="Land M."/>
            <person name="Hauser L."/>
            <person name="Kyrpides N."/>
            <person name="Mikhailova N."/>
            <person name="Nealson K."/>
            <person name="Konstantinidis K."/>
            <person name="Klappenbach J."/>
            <person name="Tiedje J."/>
            <person name="Richardson P."/>
        </authorList>
    </citation>
    <scope>NUCLEOTIDE SEQUENCE [LARGE SCALE GENOMIC DNA]</scope>
    <source>
        <strain>MR-7</strain>
    </source>
</reference>
<dbReference type="EC" id="6.1.1.15" evidence="1"/>
<dbReference type="EMBL" id="CP000444">
    <property type="protein sequence ID" value="ABI42409.1"/>
    <property type="molecule type" value="Genomic_DNA"/>
</dbReference>
<dbReference type="SMR" id="Q0HWU6"/>
<dbReference type="KEGG" id="shm:Shewmr7_1410"/>
<dbReference type="HOGENOM" id="CLU_016739_0_0_6"/>
<dbReference type="GO" id="GO:0005829">
    <property type="term" value="C:cytosol"/>
    <property type="evidence" value="ECO:0007669"/>
    <property type="project" value="TreeGrafter"/>
</dbReference>
<dbReference type="GO" id="GO:0002161">
    <property type="term" value="F:aminoacyl-tRNA deacylase activity"/>
    <property type="evidence" value="ECO:0007669"/>
    <property type="project" value="InterPro"/>
</dbReference>
<dbReference type="GO" id="GO:0005524">
    <property type="term" value="F:ATP binding"/>
    <property type="evidence" value="ECO:0007669"/>
    <property type="project" value="UniProtKB-UniRule"/>
</dbReference>
<dbReference type="GO" id="GO:0004827">
    <property type="term" value="F:proline-tRNA ligase activity"/>
    <property type="evidence" value="ECO:0007669"/>
    <property type="project" value="UniProtKB-UniRule"/>
</dbReference>
<dbReference type="GO" id="GO:0006433">
    <property type="term" value="P:prolyl-tRNA aminoacylation"/>
    <property type="evidence" value="ECO:0007669"/>
    <property type="project" value="UniProtKB-UniRule"/>
</dbReference>
<dbReference type="CDD" id="cd04334">
    <property type="entry name" value="ProRS-INS"/>
    <property type="match status" value="1"/>
</dbReference>
<dbReference type="CDD" id="cd00861">
    <property type="entry name" value="ProRS_anticodon_short"/>
    <property type="match status" value="1"/>
</dbReference>
<dbReference type="CDD" id="cd00779">
    <property type="entry name" value="ProRS_core_prok"/>
    <property type="match status" value="1"/>
</dbReference>
<dbReference type="FunFam" id="3.30.930.10:FF:000043">
    <property type="entry name" value="Proline--tRNA ligase"/>
    <property type="match status" value="1"/>
</dbReference>
<dbReference type="FunFam" id="3.30.930.10:FF:000062">
    <property type="entry name" value="Proline--tRNA ligase"/>
    <property type="match status" value="1"/>
</dbReference>
<dbReference type="FunFam" id="3.40.50.800:FF:000006">
    <property type="entry name" value="Proline--tRNA ligase"/>
    <property type="match status" value="1"/>
</dbReference>
<dbReference type="FunFam" id="3.90.960.10:FF:000001">
    <property type="entry name" value="Proline--tRNA ligase"/>
    <property type="match status" value="1"/>
</dbReference>
<dbReference type="Gene3D" id="3.40.50.800">
    <property type="entry name" value="Anticodon-binding domain"/>
    <property type="match status" value="1"/>
</dbReference>
<dbReference type="Gene3D" id="3.30.930.10">
    <property type="entry name" value="Bira Bifunctional Protein, Domain 2"/>
    <property type="match status" value="2"/>
</dbReference>
<dbReference type="Gene3D" id="3.90.960.10">
    <property type="entry name" value="YbaK/aminoacyl-tRNA synthetase-associated domain"/>
    <property type="match status" value="1"/>
</dbReference>
<dbReference type="HAMAP" id="MF_01569">
    <property type="entry name" value="Pro_tRNA_synth_type1"/>
    <property type="match status" value="1"/>
</dbReference>
<dbReference type="InterPro" id="IPR002314">
    <property type="entry name" value="aa-tRNA-synt_IIb"/>
</dbReference>
<dbReference type="InterPro" id="IPR006195">
    <property type="entry name" value="aa-tRNA-synth_II"/>
</dbReference>
<dbReference type="InterPro" id="IPR045864">
    <property type="entry name" value="aa-tRNA-synth_II/BPL/LPL"/>
</dbReference>
<dbReference type="InterPro" id="IPR004154">
    <property type="entry name" value="Anticodon-bd"/>
</dbReference>
<dbReference type="InterPro" id="IPR036621">
    <property type="entry name" value="Anticodon-bd_dom_sf"/>
</dbReference>
<dbReference type="InterPro" id="IPR002316">
    <property type="entry name" value="Pro-tRNA-ligase_IIa"/>
</dbReference>
<dbReference type="InterPro" id="IPR004500">
    <property type="entry name" value="Pro-tRNA-synth_IIa_bac-type"/>
</dbReference>
<dbReference type="InterPro" id="IPR023717">
    <property type="entry name" value="Pro-tRNA-Synthase_IIa_type1"/>
</dbReference>
<dbReference type="InterPro" id="IPR050062">
    <property type="entry name" value="Pro-tRNA_synthetase"/>
</dbReference>
<dbReference type="InterPro" id="IPR044140">
    <property type="entry name" value="ProRS_anticodon_short"/>
</dbReference>
<dbReference type="InterPro" id="IPR033730">
    <property type="entry name" value="ProRS_core_prok"/>
</dbReference>
<dbReference type="InterPro" id="IPR036754">
    <property type="entry name" value="YbaK/aa-tRNA-synt-asso_dom_sf"/>
</dbReference>
<dbReference type="InterPro" id="IPR007214">
    <property type="entry name" value="YbaK/aa-tRNA-synth-assoc-dom"/>
</dbReference>
<dbReference type="NCBIfam" id="NF006625">
    <property type="entry name" value="PRK09194.1"/>
    <property type="match status" value="1"/>
</dbReference>
<dbReference type="NCBIfam" id="TIGR00409">
    <property type="entry name" value="proS_fam_II"/>
    <property type="match status" value="1"/>
</dbReference>
<dbReference type="PANTHER" id="PTHR42753">
    <property type="entry name" value="MITOCHONDRIAL RIBOSOME PROTEIN L39/PROLYL-TRNA LIGASE FAMILY MEMBER"/>
    <property type="match status" value="1"/>
</dbReference>
<dbReference type="PANTHER" id="PTHR42753:SF2">
    <property type="entry name" value="PROLINE--TRNA LIGASE"/>
    <property type="match status" value="1"/>
</dbReference>
<dbReference type="Pfam" id="PF03129">
    <property type="entry name" value="HGTP_anticodon"/>
    <property type="match status" value="1"/>
</dbReference>
<dbReference type="Pfam" id="PF00587">
    <property type="entry name" value="tRNA-synt_2b"/>
    <property type="match status" value="1"/>
</dbReference>
<dbReference type="Pfam" id="PF04073">
    <property type="entry name" value="tRNA_edit"/>
    <property type="match status" value="1"/>
</dbReference>
<dbReference type="PIRSF" id="PIRSF001535">
    <property type="entry name" value="ProRS_1"/>
    <property type="match status" value="1"/>
</dbReference>
<dbReference type="PRINTS" id="PR01046">
    <property type="entry name" value="TRNASYNTHPRO"/>
</dbReference>
<dbReference type="SUPFAM" id="SSF52954">
    <property type="entry name" value="Class II aaRS ABD-related"/>
    <property type="match status" value="1"/>
</dbReference>
<dbReference type="SUPFAM" id="SSF55681">
    <property type="entry name" value="Class II aaRS and biotin synthetases"/>
    <property type="match status" value="1"/>
</dbReference>
<dbReference type="SUPFAM" id="SSF55826">
    <property type="entry name" value="YbaK/ProRS associated domain"/>
    <property type="match status" value="1"/>
</dbReference>
<dbReference type="PROSITE" id="PS50862">
    <property type="entry name" value="AA_TRNA_LIGASE_II"/>
    <property type="match status" value="1"/>
</dbReference>
<proteinExistence type="inferred from homology"/>
<name>SYP_SHESR</name>
<keyword id="KW-0030">Aminoacyl-tRNA synthetase</keyword>
<keyword id="KW-0067">ATP-binding</keyword>
<keyword id="KW-0963">Cytoplasm</keyword>
<keyword id="KW-0436">Ligase</keyword>
<keyword id="KW-0547">Nucleotide-binding</keyword>
<keyword id="KW-0648">Protein biosynthesis</keyword>
<protein>
    <recommendedName>
        <fullName evidence="1">Proline--tRNA ligase</fullName>
        <ecNumber evidence="1">6.1.1.15</ecNumber>
    </recommendedName>
    <alternativeName>
        <fullName evidence="1">Prolyl-tRNA synthetase</fullName>
        <shortName evidence="1">ProRS</shortName>
    </alternativeName>
</protein>
<evidence type="ECO:0000255" key="1">
    <source>
        <dbReference type="HAMAP-Rule" id="MF_01569"/>
    </source>
</evidence>